<sequence length="547" mass="58950">MKNIKVITGVIATLGIFSALLLVTGILFYSAVSSDRLNFQNASALSYQQQELGGSFQTLIETRVTINRVAIRMLKNQRDPASLDAMNTLLTNAGASLNEAEKHFNNYVNSEAIAGKDPALDAQAEASFKQMYDVLQQSIHYLKADNYAAYGNLDAQKAQDDMEQVYDQWLSQNAQLIKLASDQNQSSFTQMQWTLGIILLIVLIVLAFIWLGLQRVLLRPLQRIMAHIQTIADGDLTHEIEAEGRSEMGQLAAGLKTMQQSLIRTVSAVRDNADSIYTGAGEISAGSSDLSSRTEQQASALEETAASMEQLTATVRQNTDNARQATGLAKTASETARKGGRVVDNVVSTMNDIAESSEKIVDITSVIDGIAFQTNILALNAAVEAARAGEQGRGFAVVAGEVRTLASRSAQAAKEIKVLIENSVSRIDTGSTQVREAGETMKEIVNAVTRVTDIMGEIASASDEQSKGIEQVAQAVSEMDSVTQQNASLVEESAAAAAALEDQANELRQAVAAFRIQKQPRREASPTTLSKGLTPQPAAEQANWESF</sequence>
<comment type="function">
    <text>Acts as a receptor for citrate and mediates taxis away from phenol. Also mediates an attractant response to metal-citrate complexes.</text>
</comment>
<comment type="subcellular location">
    <subcellularLocation>
        <location>Cell inner membrane</location>
        <topology>Multi-pass membrane protein</topology>
    </subcellularLocation>
</comment>
<comment type="PTM">
    <text>Methylation level is increased by citrate and decreased by phenol.</text>
</comment>
<comment type="similarity">
    <text evidence="6">Belongs to the methyl-accepting chemotaxis (MCP) protein family.</text>
</comment>
<organism>
    <name type="scientific">Salmonella typhimurium (strain LT2 / SGSC1412 / ATCC 700720)</name>
    <dbReference type="NCBI Taxonomy" id="99287"/>
    <lineage>
        <taxon>Bacteria</taxon>
        <taxon>Pseudomonadati</taxon>
        <taxon>Pseudomonadota</taxon>
        <taxon>Gammaproteobacteria</taxon>
        <taxon>Enterobacterales</taxon>
        <taxon>Enterobacteriaceae</taxon>
        <taxon>Salmonella</taxon>
    </lineage>
</organism>
<feature type="chain" id="PRO_0000110544" description="Methyl-accepting chemotaxis citrate transducer">
    <location>
        <begin position="1"/>
        <end position="547"/>
    </location>
</feature>
<feature type="topological domain" description="Cytoplasmic" evidence="2">
    <location>
        <begin position="1"/>
        <end position="5"/>
    </location>
</feature>
<feature type="transmembrane region" description="Helical" evidence="2">
    <location>
        <begin position="6"/>
        <end position="29"/>
    </location>
</feature>
<feature type="topological domain" description="Periplasmic" evidence="2">
    <location>
        <begin position="30"/>
        <end position="189"/>
    </location>
</feature>
<feature type="transmembrane region" description="Helical" evidence="2">
    <location>
        <begin position="190"/>
        <end position="213"/>
    </location>
</feature>
<feature type="topological domain" description="Cytoplasmic" evidence="2">
    <location>
        <begin position="214"/>
        <end position="547"/>
    </location>
</feature>
<feature type="domain" description="HAMP" evidence="3">
    <location>
        <begin position="215"/>
        <end position="267"/>
    </location>
</feature>
<feature type="domain" description="Methyl-accepting transducer" evidence="4">
    <location>
        <begin position="272"/>
        <end position="501"/>
    </location>
</feature>
<feature type="region of interest" description="Disordered" evidence="5">
    <location>
        <begin position="317"/>
        <end position="336"/>
    </location>
</feature>
<feature type="region of interest" description="Disordered" evidence="5">
    <location>
        <begin position="518"/>
        <end position="547"/>
    </location>
</feature>
<feature type="modified residue" description="Glutamate methyl ester (Gln)" evidence="1">
    <location>
        <position position="296"/>
    </location>
</feature>
<feature type="modified residue" description="Glutamate methyl ester (Glu)" evidence="1">
    <location>
        <position position="303"/>
    </location>
</feature>
<feature type="modified residue" description="Glutamate methyl ester (Gln)" evidence="1">
    <location>
        <position position="310"/>
    </location>
</feature>
<feature type="modified residue" description="Glutamate methyl ester (Glu)" evidence="1">
    <location>
        <position position="492"/>
    </location>
</feature>
<feature type="modified residue" description="Glutamate methyl ester (Glu)" evidence="1">
    <location>
        <position position="501"/>
    </location>
</feature>
<gene>
    <name type="primary">tcp</name>
    <name type="ordered locus">STM3577</name>
</gene>
<keyword id="KW-0997">Cell inner membrane</keyword>
<keyword id="KW-1003">Cell membrane</keyword>
<keyword id="KW-0145">Chemotaxis</keyword>
<keyword id="KW-0472">Membrane</keyword>
<keyword id="KW-0488">Methylation</keyword>
<keyword id="KW-1185">Reference proteome</keyword>
<keyword id="KW-0807">Transducer</keyword>
<keyword id="KW-0812">Transmembrane</keyword>
<keyword id="KW-1133">Transmembrane helix</keyword>
<reference key="1">
    <citation type="journal article" date="1993" name="Proc. Natl. Acad. Sci. U.S.A.">
        <title>Cloning and characterization of the Salmonella typhimurium-specific chemoreceptor Tcp for taxis to citrate and from phenol.</title>
        <authorList>
            <person name="Yamamoto K."/>
            <person name="Imae Y."/>
        </authorList>
    </citation>
    <scope>NUCLEOTIDE SEQUENCE [GENOMIC DNA]</scope>
    <source>
        <strain>ATCC 29595 / ST1</strain>
    </source>
</reference>
<reference key="2">
    <citation type="journal article" date="2001" name="Nature">
        <title>Complete genome sequence of Salmonella enterica serovar Typhimurium LT2.</title>
        <authorList>
            <person name="McClelland M."/>
            <person name="Sanderson K.E."/>
            <person name="Spieth J."/>
            <person name="Clifton S.W."/>
            <person name="Latreille P."/>
            <person name="Courtney L."/>
            <person name="Porwollik S."/>
            <person name="Ali J."/>
            <person name="Dante M."/>
            <person name="Du F."/>
            <person name="Hou S."/>
            <person name="Layman D."/>
            <person name="Leonard S."/>
            <person name="Nguyen C."/>
            <person name="Scott K."/>
            <person name="Holmes A."/>
            <person name="Grewal N."/>
            <person name="Mulvaney E."/>
            <person name="Ryan E."/>
            <person name="Sun H."/>
            <person name="Florea L."/>
            <person name="Miller W."/>
            <person name="Stoneking T."/>
            <person name="Nhan M."/>
            <person name="Waterston R."/>
            <person name="Wilson R.K."/>
        </authorList>
    </citation>
    <scope>NUCLEOTIDE SEQUENCE [LARGE SCALE GENOMIC DNA]</scope>
    <source>
        <strain>LT2 / SGSC1412 / ATCC 700720</strain>
    </source>
</reference>
<proteinExistence type="inferred from homology"/>
<protein>
    <recommendedName>
        <fullName>Methyl-accepting chemotaxis citrate transducer</fullName>
    </recommendedName>
    <alternativeName>
        <fullName>Citrate chemoreceptor protein</fullName>
    </alternativeName>
</protein>
<evidence type="ECO:0000250" key="1"/>
<evidence type="ECO:0000255" key="2"/>
<evidence type="ECO:0000255" key="3">
    <source>
        <dbReference type="PROSITE-ProRule" id="PRU00102"/>
    </source>
</evidence>
<evidence type="ECO:0000255" key="4">
    <source>
        <dbReference type="PROSITE-ProRule" id="PRU00284"/>
    </source>
</evidence>
<evidence type="ECO:0000256" key="5">
    <source>
        <dbReference type="SAM" id="MobiDB-lite"/>
    </source>
</evidence>
<evidence type="ECO:0000305" key="6"/>
<name>MCPC_SALTY</name>
<accession>Q02755</accession>
<dbReference type="EMBL" id="L06029">
    <property type="protein sequence ID" value="AAA27231.1"/>
    <property type="molecule type" value="Genomic_DNA"/>
</dbReference>
<dbReference type="EMBL" id="AE006468">
    <property type="protein sequence ID" value="AAL22437.1"/>
    <property type="molecule type" value="Genomic_DNA"/>
</dbReference>
<dbReference type="PIR" id="A47178">
    <property type="entry name" value="A47178"/>
</dbReference>
<dbReference type="RefSeq" id="NP_462478.1">
    <property type="nucleotide sequence ID" value="NC_003197.2"/>
</dbReference>
<dbReference type="RefSeq" id="WP_000789683.1">
    <property type="nucleotide sequence ID" value="NC_003197.2"/>
</dbReference>
<dbReference type="SMR" id="Q02755"/>
<dbReference type="STRING" id="99287.STM3577"/>
<dbReference type="PaxDb" id="99287-STM3577"/>
<dbReference type="GeneID" id="1255100"/>
<dbReference type="KEGG" id="stm:STM3577"/>
<dbReference type="PATRIC" id="fig|99287.12.peg.3780"/>
<dbReference type="HOGENOM" id="CLU_000445_107_16_6"/>
<dbReference type="OMA" id="MNTHIAR"/>
<dbReference type="PhylomeDB" id="Q02755"/>
<dbReference type="BioCyc" id="SENT99287:STM3577-MONOMER"/>
<dbReference type="Proteomes" id="UP000001014">
    <property type="component" value="Chromosome"/>
</dbReference>
<dbReference type="GO" id="GO:0005886">
    <property type="term" value="C:plasma membrane"/>
    <property type="evidence" value="ECO:0000318"/>
    <property type="project" value="GO_Central"/>
</dbReference>
<dbReference type="GO" id="GO:0004888">
    <property type="term" value="F:transmembrane signaling receptor activity"/>
    <property type="evidence" value="ECO:0000318"/>
    <property type="project" value="GO_Central"/>
</dbReference>
<dbReference type="GO" id="GO:0006935">
    <property type="term" value="P:chemotaxis"/>
    <property type="evidence" value="ECO:0000318"/>
    <property type="project" value="GO_Central"/>
</dbReference>
<dbReference type="GO" id="GO:0007165">
    <property type="term" value="P:signal transduction"/>
    <property type="evidence" value="ECO:0007669"/>
    <property type="project" value="UniProtKB-KW"/>
</dbReference>
<dbReference type="CDD" id="cd06225">
    <property type="entry name" value="HAMP"/>
    <property type="match status" value="1"/>
</dbReference>
<dbReference type="CDD" id="cd11386">
    <property type="entry name" value="MCP_signal"/>
    <property type="match status" value="1"/>
</dbReference>
<dbReference type="CDD" id="cd19407">
    <property type="entry name" value="Tar_Tsr_sensor"/>
    <property type="match status" value="1"/>
</dbReference>
<dbReference type="FunFam" id="1.20.120.30:FF:000005">
    <property type="entry name" value="Methyl-accepting chemotaxis citrate transducer"/>
    <property type="match status" value="1"/>
</dbReference>
<dbReference type="FunFam" id="1.10.287.950:FF:000001">
    <property type="entry name" value="Methyl-accepting chemotaxis sensory transducer"/>
    <property type="match status" value="1"/>
</dbReference>
<dbReference type="Gene3D" id="1.20.120.30">
    <property type="entry name" value="Aspartate receptor, ligand-binding domain"/>
    <property type="match status" value="1"/>
</dbReference>
<dbReference type="Gene3D" id="1.10.287.950">
    <property type="entry name" value="Methyl-accepting chemotaxis protein"/>
    <property type="match status" value="1"/>
</dbReference>
<dbReference type="InterPro" id="IPR035440">
    <property type="entry name" value="4HB_MCP_dom_sf"/>
</dbReference>
<dbReference type="InterPro" id="IPR004090">
    <property type="entry name" value="Chemotax_Me-accpt_rcpt"/>
</dbReference>
<dbReference type="InterPro" id="IPR004091">
    <property type="entry name" value="Chemotax_Me-accpt_rcpt_Me-site"/>
</dbReference>
<dbReference type="InterPro" id="IPR003660">
    <property type="entry name" value="HAMP_dom"/>
</dbReference>
<dbReference type="InterPro" id="IPR051310">
    <property type="entry name" value="MCP_chemotaxis"/>
</dbReference>
<dbReference type="InterPro" id="IPR004089">
    <property type="entry name" value="MCPsignal_dom"/>
</dbReference>
<dbReference type="InterPro" id="IPR003122">
    <property type="entry name" value="Tar_rcpt_lig-bd"/>
</dbReference>
<dbReference type="NCBIfam" id="NF047851">
    <property type="entry name" value="MCPCitTducer"/>
    <property type="match status" value="1"/>
</dbReference>
<dbReference type="PANTHER" id="PTHR43531:SF16">
    <property type="entry name" value="METHYL-ACCEPTING CHEMOTAXIS PROTEIN II"/>
    <property type="match status" value="1"/>
</dbReference>
<dbReference type="PANTHER" id="PTHR43531">
    <property type="entry name" value="PROTEIN ICFG"/>
    <property type="match status" value="1"/>
</dbReference>
<dbReference type="Pfam" id="PF00672">
    <property type="entry name" value="HAMP"/>
    <property type="match status" value="1"/>
</dbReference>
<dbReference type="Pfam" id="PF00015">
    <property type="entry name" value="MCPsignal"/>
    <property type="match status" value="1"/>
</dbReference>
<dbReference type="Pfam" id="PF02203">
    <property type="entry name" value="TarH"/>
    <property type="match status" value="1"/>
</dbReference>
<dbReference type="PRINTS" id="PR00260">
    <property type="entry name" value="CHEMTRNSDUCR"/>
</dbReference>
<dbReference type="SMART" id="SM00304">
    <property type="entry name" value="HAMP"/>
    <property type="match status" value="1"/>
</dbReference>
<dbReference type="SMART" id="SM00283">
    <property type="entry name" value="MA"/>
    <property type="match status" value="1"/>
</dbReference>
<dbReference type="SMART" id="SM00319">
    <property type="entry name" value="TarH"/>
    <property type="match status" value="1"/>
</dbReference>
<dbReference type="SUPFAM" id="SSF47170">
    <property type="entry name" value="Aspartate receptor, ligand-binding domain"/>
    <property type="match status" value="1"/>
</dbReference>
<dbReference type="SUPFAM" id="SSF58104">
    <property type="entry name" value="Methyl-accepting chemotaxis protein (MCP) signaling domain"/>
    <property type="match status" value="1"/>
</dbReference>
<dbReference type="PROSITE" id="PS00538">
    <property type="entry name" value="CHEMOTAXIS_TRANSDUC_1"/>
    <property type="match status" value="1"/>
</dbReference>
<dbReference type="PROSITE" id="PS50111">
    <property type="entry name" value="CHEMOTAXIS_TRANSDUC_2"/>
    <property type="match status" value="1"/>
</dbReference>
<dbReference type="PROSITE" id="PS50885">
    <property type="entry name" value="HAMP"/>
    <property type="match status" value="1"/>
</dbReference>